<proteinExistence type="evidence at protein level"/>
<feature type="chain" id="PRO_0000166864" description="Malate synthase 1">
    <location>
        <begin position="1"/>
        <end position="554"/>
    </location>
</feature>
<feature type="short sequence motif" description="SKL peroxisome targeting motif" evidence="2">
    <location>
        <begin position="552"/>
        <end position="554"/>
    </location>
</feature>
<feature type="active site" description="Proton acceptor" evidence="1">
    <location>
        <position position="177"/>
    </location>
</feature>
<feature type="active site" description="Proton donor" evidence="1">
    <location>
        <position position="457"/>
    </location>
</feature>
<feature type="sequence variant" description="In strain: Awamori-1, AKU-4011, K1, K5, NRIC 23, NRIC 1413 and NRIC 1685." evidence="4">
    <original>A</original>
    <variation>T</variation>
    <location>
        <position position="118"/>
    </location>
</feature>
<feature type="sequence variant" description="In strain: Pasteur Red." evidence="4">
    <original>I</original>
    <variation>V</variation>
    <location>
        <position position="199"/>
    </location>
</feature>
<feature type="sequence variant" description="In strain: YJM326." evidence="5">
    <original>G</original>
    <variation>C</variation>
    <location>
        <position position="217"/>
    </location>
</feature>
<feature type="sequence variant" description="In strain: Levuline ALS, Lalvin CY-3079, Cote des Blancs, I14, M1, M11, M12, M13, M15, M2, M20, M21, M22, M24, M29, M3, M30, M31, M32, M33, M34, M4, M5, M6, M7, M8, M9, NRRL Y-1438, NRRL YB-1952, NRRL Y-2411, Pasteur Red, UCD 51, UCD 2120, UCD 175, UCD 529, UCD 765, UCD 781, UCD 820, UCD 762, YJM269, YJM270, YJM308, YJM326, YJM434 and YJM1129." evidence="4 5">
    <original>T</original>
    <variation>S</variation>
    <location>
        <position position="253"/>
    </location>
</feature>
<feature type="sequence variant" description="In strain: SK1, V1-09, YJM269, YJM270, YJM280, YJM320, YJM326, YJM339, YJM627 and YJM1129." evidence="5">
    <original>N</original>
    <variation>D</variation>
    <location>
        <position position="310"/>
    </location>
</feature>
<feature type="sequence variant" description="In strain: YJM269 and YJM270." evidence="5">
    <original>I</original>
    <variation>V</variation>
    <location>
        <position position="541"/>
    </location>
</feature>
<feature type="mutagenesis site" description="Impairs the peroxisomal localitation and leads to both nuclear and cytosolic localization." evidence="2">
    <location>
        <begin position="552"/>
        <end position="554"/>
    </location>
</feature>
<reference key="1">
    <citation type="journal article" date="1992" name="Nucleic Acids Res.">
        <title>Differentially regulated malate synthase genes participate in carbon and nitrogen metabolism of S. cerevisiae.</title>
        <authorList>
            <person name="Hartig A."/>
            <person name="Simon M.M."/>
            <person name="Schuster T."/>
            <person name="Daugherty J.R."/>
            <person name="Yoo H.S."/>
            <person name="Cooper T.G."/>
        </authorList>
    </citation>
    <scope>NUCLEOTIDE SEQUENCE [GENOMIC DNA]</scope>
    <scope>FUNCTION</scope>
    <scope>INDUCTION</scope>
    <scope>DISRUPTION PHENOTYPE</scope>
</reference>
<reference key="2">
    <citation type="journal article" date="2008" name="Genetics">
        <title>Sequential elimination of major-effect contributors identifies additional quantitative trait loci conditioning high-temperature growth in yeast.</title>
        <authorList>
            <person name="Sinha H."/>
            <person name="David L."/>
            <person name="Pascon R.C."/>
            <person name="Clauder-Muenster S."/>
            <person name="Krishnakumar S."/>
            <person name="Nguyen M."/>
            <person name="Shi G."/>
            <person name="Dean J."/>
            <person name="Davis R.W."/>
            <person name="Oefner P.J."/>
            <person name="McCusker J.H."/>
            <person name="Steinmetz L.M."/>
        </authorList>
    </citation>
    <scope>NUCLEOTIDE SEQUENCE [GENOMIC DNA]</scope>
    <scope>VARIANTS CYS-217; SER-253; ASP-310 AND VAL-541</scope>
    <source>
        <strain>ATCC 200060 / W303</strain>
        <strain>S103</strain>
        <strain>SK1</strain>
        <strain>V1-09</strain>
        <strain>YJM 1129</strain>
        <strain>YJM 269</strain>
        <strain>YJM 270</strain>
        <strain>YJM 320</strain>
        <strain>YJM 326</strain>
        <strain>YJM 339</strain>
        <strain>YJM 627</strain>
        <strain>YJM230</strain>
    </source>
</reference>
<reference key="3">
    <citation type="journal article" date="1997" name="Yeast">
        <title>The DNA sequence of cosmid 14-13b from chromosome XIV of Saccharomyces cerevisiae reveals an unusually high number of overlapping open reading frames.</title>
        <authorList>
            <person name="de Antoni A."/>
            <person name="D'Angelo M."/>
            <person name="Dal Pero F."/>
            <person name="Sartorello F."/>
            <person name="Pandolfo D."/>
            <person name="Pallavicini A."/>
            <person name="Lanfranchi G."/>
            <person name="Valle G."/>
        </authorList>
    </citation>
    <scope>NUCLEOTIDE SEQUENCE [GENOMIC DNA]</scope>
</reference>
<reference key="4">
    <citation type="journal article" date="1997" name="Nature">
        <title>The nucleotide sequence of Saccharomyces cerevisiae chromosome XIV and its evolutionary implications.</title>
        <authorList>
            <person name="Philippsen P."/>
            <person name="Kleine K."/>
            <person name="Poehlmann R."/>
            <person name="Duesterhoeft A."/>
            <person name="Hamberg K."/>
            <person name="Hegemann J.H."/>
            <person name="Obermaier B."/>
            <person name="Urrestarazu L.A."/>
            <person name="Aert R."/>
            <person name="Albermann K."/>
            <person name="Altmann R."/>
            <person name="Andre B."/>
            <person name="Baladron V."/>
            <person name="Ballesta J.P.G."/>
            <person name="Becam A.-M."/>
            <person name="Beinhauer J.D."/>
            <person name="Boskovic J."/>
            <person name="Buitrago M.J."/>
            <person name="Bussereau F."/>
            <person name="Coster F."/>
            <person name="Crouzet M."/>
            <person name="D'Angelo M."/>
            <person name="Dal Pero F."/>
            <person name="De Antoni A."/>
            <person name="del Rey F."/>
            <person name="Doignon F."/>
            <person name="Domdey H."/>
            <person name="Dubois E."/>
            <person name="Fiedler T.A."/>
            <person name="Fleig U."/>
            <person name="Floeth M."/>
            <person name="Fritz C."/>
            <person name="Gaillardin C."/>
            <person name="Garcia-Cantalejo J.M."/>
            <person name="Glansdorff N."/>
            <person name="Goffeau A."/>
            <person name="Gueldener U."/>
            <person name="Herbert C.J."/>
            <person name="Heumann K."/>
            <person name="Heuss-Neitzel D."/>
            <person name="Hilbert H."/>
            <person name="Hinni K."/>
            <person name="Iraqui Houssaini I."/>
            <person name="Jacquet M."/>
            <person name="Jimenez A."/>
            <person name="Jonniaux J.-L."/>
            <person name="Karpfinger-Hartl L."/>
            <person name="Lanfranchi G."/>
            <person name="Lepingle A."/>
            <person name="Levesque H."/>
            <person name="Lyck R."/>
            <person name="Maftahi M."/>
            <person name="Mallet L."/>
            <person name="Maurer C.T.C."/>
            <person name="Messenguy F."/>
            <person name="Mewes H.-W."/>
            <person name="Moestl D."/>
            <person name="Nasr F."/>
            <person name="Nicaud J.-M."/>
            <person name="Niedenthal R.K."/>
            <person name="Pandolfo D."/>
            <person name="Pierard A."/>
            <person name="Piravandi E."/>
            <person name="Planta R.J."/>
            <person name="Pohl T.M."/>
            <person name="Purnelle B."/>
            <person name="Rebischung C."/>
            <person name="Remacha M.A."/>
            <person name="Revuelta J.L."/>
            <person name="Rinke M."/>
            <person name="Saiz J.E."/>
            <person name="Sartorello F."/>
            <person name="Scherens B."/>
            <person name="Sen-Gupta M."/>
            <person name="Soler-Mira A."/>
            <person name="Urbanus J.H.M."/>
            <person name="Valle G."/>
            <person name="Van Dyck L."/>
            <person name="Verhasselt P."/>
            <person name="Vierendeels F."/>
            <person name="Vissers S."/>
            <person name="Voet M."/>
            <person name="Volckaert G."/>
            <person name="Wach A."/>
            <person name="Wambutt R."/>
            <person name="Wedler H."/>
            <person name="Zollner A."/>
            <person name="Hani J."/>
        </authorList>
    </citation>
    <scope>NUCLEOTIDE SEQUENCE [LARGE SCALE GENOMIC DNA]</scope>
    <source>
        <strain>ATCC 204508 / S288c</strain>
    </source>
</reference>
<reference key="5">
    <citation type="journal article" date="2014" name="G3 (Bethesda)">
        <title>The reference genome sequence of Saccharomyces cerevisiae: Then and now.</title>
        <authorList>
            <person name="Engel S.R."/>
            <person name="Dietrich F.S."/>
            <person name="Fisk D.G."/>
            <person name="Binkley G."/>
            <person name="Balakrishnan R."/>
            <person name="Costanzo M.C."/>
            <person name="Dwight S.S."/>
            <person name="Hitz B.C."/>
            <person name="Karra K."/>
            <person name="Nash R.S."/>
            <person name="Weng S."/>
            <person name="Wong E.D."/>
            <person name="Lloyd P."/>
            <person name="Skrzypek M.S."/>
            <person name="Miyasato S.R."/>
            <person name="Simison M."/>
            <person name="Cherry J.M."/>
        </authorList>
    </citation>
    <scope>GENOME REANNOTATION</scope>
    <source>
        <strain>ATCC 204508 / S288c</strain>
    </source>
</reference>
<reference key="6">
    <citation type="journal article" date="2005" name="PLoS Genet.">
        <title>Evidence for domesticated and wild populations of Saccharomyces cerevisiae.</title>
        <authorList>
            <person name="Fay J.C."/>
            <person name="Benavides J.A."/>
        </authorList>
    </citation>
    <scope>NUCLEOTIDE SEQUENCE [GENOMIC DNA] OF 1-282</scope>
    <scope>VARIANTS THR-118; VAL-199 AND SER-253</scope>
    <source>
        <strain>AKU-4011</strain>
        <strain>ATCC 204508 / S288c</strain>
        <strain>ATCC 9804 / CBS 400 / DSM 70478 / IFO 0210 / JCM 2220</strain>
        <strain>Awamori-1</strain>
        <strain>Cote des blancs</strain>
        <strain>I14</strain>
        <strain>K1</strain>
        <strain>K10</strain>
        <strain>K5</strain>
        <strain>K9</strain>
        <strain>Lalvin 71B</strain>
        <strain>Lalvin BM45</strain>
        <strain>Lalvin CY-3079</strain>
        <strain>Levuline ALS</strain>
        <strain>M1</strain>
        <strain>M11</strain>
        <strain>M12</strain>
        <strain>M13</strain>
        <strain>M15</strain>
        <strain>M17</strain>
        <strain>M19</strain>
        <strain>M2</strain>
        <strain>M20</strain>
        <strain>M21</strain>
        <strain>M24</strain>
        <strain>M29</strain>
        <strain>M3</strain>
        <strain>M30</strain>
        <strain>M31</strain>
        <strain>M32</strain>
        <strain>M33</strain>
        <strain>M34</strain>
        <strain>M4</strain>
        <strain>M5</strain>
        <strain>M6</strain>
        <strain>M7</strain>
        <strain>M8</strain>
        <strain>M9</strain>
        <strain>NRIC 1413</strain>
        <strain>NRIC 1685</strain>
        <strain>NRIC 23</strain>
        <strain>NRRL Y-1438</strain>
        <strain>NRRL Y-1532</strain>
        <strain>NRRL Y-1546</strain>
        <strain>NRRL Y-2411</strain>
        <strain>NRRL Y-390</strain>
        <strain>NRRL Y-5997</strain>
        <strain>NRRL Y-7567</strain>
        <strain>NRRL YB-1952</strain>
        <strain>Pasteur Red</strain>
        <strain>UCD 175</strain>
        <strain>UCD 2120</strain>
        <strain>UCD 529</strain>
        <strain>UCD 612</strain>
        <strain>UCD 762</strain>
        <strain>UCD 765</strain>
        <strain>UCD 781</strain>
        <strain>UCD 820</strain>
        <strain>UCD51</strain>
        <strain>YJM 145</strain>
        <strain>YJM 269</strain>
        <strain>YJM 270</strain>
        <strain>YJM 280</strain>
        <strain>YJM 320</strain>
        <strain>YJM 326</strain>
        <strain>YJM 339</strain>
        <strain>YJM 421</strain>
        <strain>YJM 627</strain>
        <strain>YJM1129 YPS163</strain>
        <strain>YJM308</strain>
        <strain>YJM434</strain>
        <strain>YJM436</strain>
        <strain>YJM440</strain>
        <strain>YJM454</strain>
        <strain>YPS1000</strain>
        <strain>YPS1009</strain>
        <strain>Zymaflore F15</strain>
        <strain>Zymaflore VL3</strain>
    </source>
</reference>
<reference key="7">
    <citation type="journal article" date="2002" name="Eur. J. Biochem.">
        <title>Targeting of malate synthase 1 to the peroxisomes of Saccharomyces cerevisiae cells depends on growth on oleic acid medium.</title>
        <authorList>
            <person name="Kunze M."/>
            <person name="Kragler F."/>
            <person name="Binder M."/>
            <person name="Hartig A."/>
            <person name="Gurvitz A."/>
        </authorList>
    </citation>
    <scope>FUNCTION</scope>
    <scope>SUBCELLULAR LOCATION</scope>
    <scope>DOMAIN</scope>
    <scope>MUTAGENESIS OF 552-SER--LEU-554</scope>
    <scope>DISRUPTION PHENOTYPE</scope>
</reference>
<reference key="8">
    <citation type="journal article" date="2016" name="J. Cell Sci.">
        <title>Pex9p is a new yeast peroxisomal import receptor for PTS1-containing proteins.</title>
        <authorList>
            <person name="Effelsberg D."/>
            <person name="Cruz-Zaragoza L.D."/>
            <person name="Schliebs W."/>
            <person name="Erdmann R."/>
        </authorList>
    </citation>
    <scope>INTERACTION WITH PEX9</scope>
    <scope>SUBCELLULAR LOCATION</scope>
</reference>
<accession>P30952</accession>
<accession>B0KZR8</accession>
<accession>B0KZS7</accession>
<accession>B0KZU5</accession>
<accession>B0KZY1</accession>
<accession>B0L026</accession>
<accession>D6W165</accession>
<accession>Q4KQ64</accession>
<accession>Q4KQ91</accession>
<accession>Q4KQC3</accession>
<accession>Q4KQC4</accession>
<accession>Q4KQC8</accession>
<name>MLS1_YEAST</name>
<dbReference type="EC" id="2.3.3.9" evidence="1"/>
<dbReference type="EMBL" id="X64407">
    <property type="protein sequence ID" value="CAA45750.1"/>
    <property type="molecule type" value="Genomic_DNA"/>
</dbReference>
<dbReference type="EMBL" id="EF125216">
    <property type="protein sequence ID" value="ABN58540.1"/>
    <property type="molecule type" value="Genomic_DNA"/>
</dbReference>
<dbReference type="EMBL" id="EF125217">
    <property type="protein sequence ID" value="ABN58549.1"/>
    <property type="molecule type" value="Genomic_DNA"/>
</dbReference>
<dbReference type="EMBL" id="EF125218">
    <property type="protein sequence ID" value="ABN58558.1"/>
    <property type="molecule type" value="Genomic_DNA"/>
</dbReference>
<dbReference type="EMBL" id="EF125219">
    <property type="protein sequence ID" value="ABN58567.1"/>
    <property type="molecule type" value="Genomic_DNA"/>
</dbReference>
<dbReference type="EMBL" id="EF125220">
    <property type="protein sequence ID" value="ABN58575.1"/>
    <property type="molecule type" value="Genomic_DNA"/>
</dbReference>
<dbReference type="EMBL" id="EF125221">
    <property type="protein sequence ID" value="ABN58585.1"/>
    <property type="molecule type" value="Genomic_DNA"/>
</dbReference>
<dbReference type="EMBL" id="EF125222">
    <property type="protein sequence ID" value="ABN58594.1"/>
    <property type="molecule type" value="Genomic_DNA"/>
</dbReference>
<dbReference type="EMBL" id="EF125223">
    <property type="protein sequence ID" value="ABN58603.1"/>
    <property type="molecule type" value="Genomic_DNA"/>
</dbReference>
<dbReference type="EMBL" id="EF125224">
    <property type="protein sequence ID" value="ABN58612.1"/>
    <property type="molecule type" value="Genomic_DNA"/>
</dbReference>
<dbReference type="EMBL" id="EF125225">
    <property type="protein sequence ID" value="ABN58621.1"/>
    <property type="molecule type" value="Genomic_DNA"/>
</dbReference>
<dbReference type="EMBL" id="EF125226">
    <property type="protein sequence ID" value="ABN58630.1"/>
    <property type="molecule type" value="Genomic_DNA"/>
</dbReference>
<dbReference type="EMBL" id="EF125228">
    <property type="protein sequence ID" value="ABN58648.1"/>
    <property type="molecule type" value="Genomic_DNA"/>
</dbReference>
<dbReference type="EMBL" id="Z69382">
    <property type="protein sequence ID" value="CAA93390.1"/>
    <property type="molecule type" value="Genomic_DNA"/>
</dbReference>
<dbReference type="EMBL" id="Z71393">
    <property type="protein sequence ID" value="CAA95997.1"/>
    <property type="molecule type" value="Genomic_DNA"/>
</dbReference>
<dbReference type="EMBL" id="AY942279">
    <property type="protein sequence ID" value="AAY22671.1"/>
    <property type="molecule type" value="Genomic_DNA"/>
</dbReference>
<dbReference type="EMBL" id="AY942280">
    <property type="protein sequence ID" value="AAY22672.1"/>
    <property type="molecule type" value="Genomic_DNA"/>
</dbReference>
<dbReference type="EMBL" id="AY942281">
    <property type="protein sequence ID" value="AAY22673.1"/>
    <property type="molecule type" value="Genomic_DNA"/>
</dbReference>
<dbReference type="EMBL" id="AY942282">
    <property type="protein sequence ID" value="AAY22674.1"/>
    <property type="molecule type" value="Genomic_DNA"/>
</dbReference>
<dbReference type="EMBL" id="AY942283">
    <property type="protein sequence ID" value="AAY22675.1"/>
    <property type="molecule type" value="Genomic_DNA"/>
</dbReference>
<dbReference type="EMBL" id="AY942284">
    <property type="protein sequence ID" value="AAY22676.1"/>
    <property type="molecule type" value="Genomic_DNA"/>
</dbReference>
<dbReference type="EMBL" id="AY942285">
    <property type="protein sequence ID" value="AAY22677.1"/>
    <property type="molecule type" value="Genomic_DNA"/>
</dbReference>
<dbReference type="EMBL" id="AY942286">
    <property type="protein sequence ID" value="AAY22678.1"/>
    <property type="molecule type" value="Genomic_DNA"/>
</dbReference>
<dbReference type="EMBL" id="AY942287">
    <property type="protein sequence ID" value="AAY22679.1"/>
    <property type="molecule type" value="Genomic_DNA"/>
</dbReference>
<dbReference type="EMBL" id="AY942288">
    <property type="protein sequence ID" value="AAY22680.1"/>
    <property type="molecule type" value="Genomic_DNA"/>
</dbReference>
<dbReference type="EMBL" id="AY942289">
    <property type="protein sequence ID" value="AAY22681.1"/>
    <property type="molecule type" value="Genomic_DNA"/>
</dbReference>
<dbReference type="EMBL" id="AY942290">
    <property type="protein sequence ID" value="AAY22682.1"/>
    <property type="molecule type" value="Genomic_DNA"/>
</dbReference>
<dbReference type="EMBL" id="AY942291">
    <property type="protein sequence ID" value="AAY22683.1"/>
    <property type="molecule type" value="Genomic_DNA"/>
</dbReference>
<dbReference type="EMBL" id="AY942292">
    <property type="protein sequence ID" value="AAY22684.1"/>
    <property type="molecule type" value="Genomic_DNA"/>
</dbReference>
<dbReference type="EMBL" id="AY942293">
    <property type="protein sequence ID" value="AAY22685.1"/>
    <property type="molecule type" value="Genomic_DNA"/>
</dbReference>
<dbReference type="EMBL" id="AY942294">
    <property type="protein sequence ID" value="AAY22686.1"/>
    <property type="molecule type" value="Genomic_DNA"/>
</dbReference>
<dbReference type="EMBL" id="AY942295">
    <property type="protein sequence ID" value="AAY22687.1"/>
    <property type="molecule type" value="Genomic_DNA"/>
</dbReference>
<dbReference type="EMBL" id="AY942296">
    <property type="protein sequence ID" value="AAY22688.1"/>
    <property type="molecule type" value="Genomic_DNA"/>
</dbReference>
<dbReference type="EMBL" id="AY942297">
    <property type="protein sequence ID" value="AAY22689.1"/>
    <property type="molecule type" value="Genomic_DNA"/>
</dbReference>
<dbReference type="EMBL" id="AY942298">
    <property type="protein sequence ID" value="AAY22690.1"/>
    <property type="molecule type" value="Genomic_DNA"/>
</dbReference>
<dbReference type="EMBL" id="AY942299">
    <property type="protein sequence ID" value="AAY22691.1"/>
    <property type="molecule type" value="Genomic_DNA"/>
</dbReference>
<dbReference type="EMBL" id="AY942300">
    <property type="protein sequence ID" value="AAY22692.1"/>
    <property type="molecule type" value="Genomic_DNA"/>
</dbReference>
<dbReference type="EMBL" id="AY942301">
    <property type="protein sequence ID" value="AAY22693.1"/>
    <property type="molecule type" value="Genomic_DNA"/>
</dbReference>
<dbReference type="EMBL" id="AY942302">
    <property type="protein sequence ID" value="AAY22694.1"/>
    <property type="molecule type" value="Genomic_DNA"/>
</dbReference>
<dbReference type="EMBL" id="AY942303">
    <property type="protein sequence ID" value="AAY22695.1"/>
    <property type="molecule type" value="Genomic_DNA"/>
</dbReference>
<dbReference type="EMBL" id="AY942304">
    <property type="protein sequence ID" value="AAY22696.1"/>
    <property type="molecule type" value="Genomic_DNA"/>
</dbReference>
<dbReference type="EMBL" id="AY942305">
    <property type="protein sequence ID" value="AAY22697.1"/>
    <property type="molecule type" value="Genomic_DNA"/>
</dbReference>
<dbReference type="EMBL" id="AY942306">
    <property type="protein sequence ID" value="AAY22698.1"/>
    <property type="molecule type" value="Genomic_DNA"/>
</dbReference>
<dbReference type="EMBL" id="AY942307">
    <property type="protein sequence ID" value="AAY22699.1"/>
    <property type="molecule type" value="Genomic_DNA"/>
</dbReference>
<dbReference type="EMBL" id="AY942308">
    <property type="protein sequence ID" value="AAY22700.1"/>
    <property type="molecule type" value="Genomic_DNA"/>
</dbReference>
<dbReference type="EMBL" id="AY942309">
    <property type="protein sequence ID" value="AAY22701.1"/>
    <property type="molecule type" value="Genomic_DNA"/>
</dbReference>
<dbReference type="EMBL" id="AY942310">
    <property type="protein sequence ID" value="AAY22702.1"/>
    <property type="molecule type" value="Genomic_DNA"/>
</dbReference>
<dbReference type="EMBL" id="AY942311">
    <property type="protein sequence ID" value="AAY22703.1"/>
    <property type="molecule type" value="Genomic_DNA"/>
</dbReference>
<dbReference type="EMBL" id="AY942312">
    <property type="protein sequence ID" value="AAY22704.1"/>
    <property type="molecule type" value="Genomic_DNA"/>
</dbReference>
<dbReference type="EMBL" id="AY942313">
    <property type="protein sequence ID" value="AAY22705.1"/>
    <property type="molecule type" value="Genomic_DNA"/>
</dbReference>
<dbReference type="EMBL" id="AY942314">
    <property type="protein sequence ID" value="AAY22706.1"/>
    <property type="molecule type" value="Genomic_DNA"/>
</dbReference>
<dbReference type="EMBL" id="AY942315">
    <property type="protein sequence ID" value="AAY22707.1"/>
    <property type="molecule type" value="Genomic_DNA"/>
</dbReference>
<dbReference type="EMBL" id="AY942316">
    <property type="protein sequence ID" value="AAY22708.1"/>
    <property type="molecule type" value="Genomic_DNA"/>
</dbReference>
<dbReference type="EMBL" id="AY942317">
    <property type="protein sequence ID" value="AAY22709.1"/>
    <property type="molecule type" value="Genomic_DNA"/>
</dbReference>
<dbReference type="EMBL" id="AY942318">
    <property type="protein sequence ID" value="AAY22710.1"/>
    <property type="molecule type" value="Genomic_DNA"/>
</dbReference>
<dbReference type="EMBL" id="AY942319">
    <property type="protein sequence ID" value="AAY22711.1"/>
    <property type="molecule type" value="Genomic_DNA"/>
</dbReference>
<dbReference type="EMBL" id="AY942320">
    <property type="protein sequence ID" value="AAY22712.1"/>
    <property type="molecule type" value="Genomic_DNA"/>
</dbReference>
<dbReference type="EMBL" id="AY942321">
    <property type="protein sequence ID" value="AAY22713.1"/>
    <property type="molecule type" value="Genomic_DNA"/>
</dbReference>
<dbReference type="EMBL" id="AY942322">
    <property type="protein sequence ID" value="AAY22714.1"/>
    <property type="molecule type" value="Genomic_DNA"/>
</dbReference>
<dbReference type="EMBL" id="AY942323">
    <property type="protein sequence ID" value="AAY22715.1"/>
    <property type="molecule type" value="Genomic_DNA"/>
</dbReference>
<dbReference type="EMBL" id="AY942324">
    <property type="protein sequence ID" value="AAY22716.1"/>
    <property type="molecule type" value="Genomic_DNA"/>
</dbReference>
<dbReference type="EMBL" id="AY942325">
    <property type="protein sequence ID" value="AAY22717.1"/>
    <property type="molecule type" value="Genomic_DNA"/>
</dbReference>
<dbReference type="EMBL" id="AY942326">
    <property type="protein sequence ID" value="AAY22718.1"/>
    <property type="molecule type" value="Genomic_DNA"/>
</dbReference>
<dbReference type="EMBL" id="AY942327">
    <property type="protein sequence ID" value="AAY22719.1"/>
    <property type="molecule type" value="Genomic_DNA"/>
</dbReference>
<dbReference type="EMBL" id="AY942328">
    <property type="protein sequence ID" value="AAY22720.1"/>
    <property type="molecule type" value="Genomic_DNA"/>
</dbReference>
<dbReference type="EMBL" id="AY942329">
    <property type="protein sequence ID" value="AAY22721.1"/>
    <property type="molecule type" value="Genomic_DNA"/>
</dbReference>
<dbReference type="EMBL" id="AY942330">
    <property type="protein sequence ID" value="AAY22722.1"/>
    <property type="molecule type" value="Genomic_DNA"/>
</dbReference>
<dbReference type="EMBL" id="AY942331">
    <property type="protein sequence ID" value="AAY22723.1"/>
    <property type="molecule type" value="Genomic_DNA"/>
</dbReference>
<dbReference type="EMBL" id="AY942332">
    <property type="protein sequence ID" value="AAY22724.1"/>
    <property type="molecule type" value="Genomic_DNA"/>
</dbReference>
<dbReference type="EMBL" id="AY942333">
    <property type="protein sequence ID" value="AAY22725.1"/>
    <property type="molecule type" value="Genomic_DNA"/>
</dbReference>
<dbReference type="EMBL" id="AY942334">
    <property type="protein sequence ID" value="AAY22726.1"/>
    <property type="molecule type" value="Genomic_DNA"/>
</dbReference>
<dbReference type="EMBL" id="AY942335">
    <property type="protein sequence ID" value="AAY22727.1"/>
    <property type="molecule type" value="Genomic_DNA"/>
</dbReference>
<dbReference type="EMBL" id="AY942336">
    <property type="protein sequence ID" value="AAY22728.1"/>
    <property type="molecule type" value="Genomic_DNA"/>
</dbReference>
<dbReference type="EMBL" id="AY942337">
    <property type="protein sequence ID" value="AAY22729.1"/>
    <property type="molecule type" value="Genomic_DNA"/>
</dbReference>
<dbReference type="EMBL" id="AY942338">
    <property type="protein sequence ID" value="AAY22730.1"/>
    <property type="molecule type" value="Genomic_DNA"/>
</dbReference>
<dbReference type="EMBL" id="AY942339">
    <property type="protein sequence ID" value="AAY22731.1"/>
    <property type="molecule type" value="Genomic_DNA"/>
</dbReference>
<dbReference type="EMBL" id="AY942340">
    <property type="protein sequence ID" value="AAY22732.1"/>
    <property type="molecule type" value="Genomic_DNA"/>
</dbReference>
<dbReference type="EMBL" id="AY942341">
    <property type="protein sequence ID" value="AAY22733.1"/>
    <property type="molecule type" value="Genomic_DNA"/>
</dbReference>
<dbReference type="EMBL" id="AY942342">
    <property type="protein sequence ID" value="AAY22734.1"/>
    <property type="molecule type" value="Genomic_DNA"/>
</dbReference>
<dbReference type="EMBL" id="AY942343">
    <property type="protein sequence ID" value="AAY22735.1"/>
    <property type="molecule type" value="Genomic_DNA"/>
</dbReference>
<dbReference type="EMBL" id="AY942344">
    <property type="protein sequence ID" value="AAY22736.1"/>
    <property type="molecule type" value="Genomic_DNA"/>
</dbReference>
<dbReference type="EMBL" id="AY942345">
    <property type="protein sequence ID" value="AAY22737.1"/>
    <property type="molecule type" value="Genomic_DNA"/>
</dbReference>
<dbReference type="EMBL" id="AY942346">
    <property type="protein sequence ID" value="AAY22738.1"/>
    <property type="molecule type" value="Genomic_DNA"/>
</dbReference>
<dbReference type="EMBL" id="AY942347">
    <property type="protein sequence ID" value="AAY22739.1"/>
    <property type="molecule type" value="Genomic_DNA"/>
</dbReference>
<dbReference type="EMBL" id="AY942348">
    <property type="protein sequence ID" value="AAY22740.1"/>
    <property type="molecule type" value="Genomic_DNA"/>
</dbReference>
<dbReference type="EMBL" id="AY942349">
    <property type="protein sequence ID" value="AAY22741.1"/>
    <property type="molecule type" value="Genomic_DNA"/>
</dbReference>
<dbReference type="EMBL" id="AY942350">
    <property type="protein sequence ID" value="AAY22742.1"/>
    <property type="molecule type" value="Genomic_DNA"/>
</dbReference>
<dbReference type="EMBL" id="AY942351">
    <property type="protein sequence ID" value="AAY22743.1"/>
    <property type="molecule type" value="Genomic_DNA"/>
</dbReference>
<dbReference type="EMBL" id="AY942352">
    <property type="protein sequence ID" value="AAY22744.1"/>
    <property type="molecule type" value="Genomic_DNA"/>
</dbReference>
<dbReference type="EMBL" id="AY942353">
    <property type="protein sequence ID" value="AAY22745.1"/>
    <property type="molecule type" value="Genomic_DNA"/>
</dbReference>
<dbReference type="EMBL" id="AY942354">
    <property type="protein sequence ID" value="AAY22746.1"/>
    <property type="molecule type" value="Genomic_DNA"/>
</dbReference>
<dbReference type="EMBL" id="AY942355">
    <property type="protein sequence ID" value="AAY22747.1"/>
    <property type="molecule type" value="Genomic_DNA"/>
</dbReference>
<dbReference type="EMBL" id="BK006947">
    <property type="protein sequence ID" value="DAA10431.1"/>
    <property type="molecule type" value="Genomic_DNA"/>
</dbReference>
<dbReference type="PIR" id="S26645">
    <property type="entry name" value="S26645"/>
</dbReference>
<dbReference type="RefSeq" id="NP_014282.1">
    <property type="nucleotide sequence ID" value="NM_001182955.1"/>
</dbReference>
<dbReference type="SMR" id="P30952"/>
<dbReference type="BioGRID" id="35709">
    <property type="interactions" value="93"/>
</dbReference>
<dbReference type="FunCoup" id="P30952">
    <property type="interactions" value="715"/>
</dbReference>
<dbReference type="IntAct" id="P30952">
    <property type="interactions" value="51"/>
</dbReference>
<dbReference type="STRING" id="4932.YNL117W"/>
<dbReference type="iPTMnet" id="P30952"/>
<dbReference type="PaxDb" id="4932-YNL117W"/>
<dbReference type="PeptideAtlas" id="P30952"/>
<dbReference type="TopDownProteomics" id="P30952"/>
<dbReference type="EnsemblFungi" id="YNL117W_mRNA">
    <property type="protein sequence ID" value="YNL117W"/>
    <property type="gene ID" value="YNL117W"/>
</dbReference>
<dbReference type="GeneID" id="855606"/>
<dbReference type="KEGG" id="sce:YNL117W"/>
<dbReference type="AGR" id="SGD:S000005061"/>
<dbReference type="SGD" id="S000005061">
    <property type="gene designation" value="MLS1"/>
</dbReference>
<dbReference type="VEuPathDB" id="FungiDB:YNL117W"/>
<dbReference type="eggNOG" id="KOG1261">
    <property type="taxonomic scope" value="Eukaryota"/>
</dbReference>
<dbReference type="GeneTree" id="ENSGT00940000174673"/>
<dbReference type="HOGENOM" id="CLU_018928_3_0_1"/>
<dbReference type="InParanoid" id="P30952"/>
<dbReference type="OMA" id="DGSWIAH"/>
<dbReference type="OrthoDB" id="186072at2759"/>
<dbReference type="BioCyc" id="MetaCyc:YNL117W-MONOMER"/>
<dbReference type="BioCyc" id="YEAST:YNL117W-MONOMER"/>
<dbReference type="UniPathway" id="UPA00703">
    <property type="reaction ID" value="UER00720"/>
</dbReference>
<dbReference type="BioGRID-ORCS" id="855606">
    <property type="hits" value="0 hits in 10 CRISPR screens"/>
</dbReference>
<dbReference type="PRO" id="PR:P30952"/>
<dbReference type="Proteomes" id="UP000002311">
    <property type="component" value="Chromosome XIV"/>
</dbReference>
<dbReference type="RNAct" id="P30952">
    <property type="molecule type" value="protein"/>
</dbReference>
<dbReference type="GO" id="GO:0005737">
    <property type="term" value="C:cytoplasm"/>
    <property type="evidence" value="ECO:0007005"/>
    <property type="project" value="SGD"/>
</dbReference>
<dbReference type="GO" id="GO:0005829">
    <property type="term" value="C:cytosol"/>
    <property type="evidence" value="ECO:0000314"/>
    <property type="project" value="SGD"/>
</dbReference>
<dbReference type="GO" id="GO:0005782">
    <property type="term" value="C:peroxisomal matrix"/>
    <property type="evidence" value="ECO:0000314"/>
    <property type="project" value="SGD"/>
</dbReference>
<dbReference type="GO" id="GO:0005777">
    <property type="term" value="C:peroxisome"/>
    <property type="evidence" value="ECO:0000314"/>
    <property type="project" value="SGD"/>
</dbReference>
<dbReference type="GO" id="GO:0004474">
    <property type="term" value="F:malate synthase activity"/>
    <property type="evidence" value="ECO:0000315"/>
    <property type="project" value="SGD"/>
</dbReference>
<dbReference type="GO" id="GO:0006097">
    <property type="term" value="P:glyoxylate cycle"/>
    <property type="evidence" value="ECO:0000315"/>
    <property type="project" value="SGD"/>
</dbReference>
<dbReference type="GO" id="GO:0006099">
    <property type="term" value="P:tricarboxylic acid cycle"/>
    <property type="evidence" value="ECO:0007669"/>
    <property type="project" value="UniProtKB-KW"/>
</dbReference>
<dbReference type="CDD" id="cd00727">
    <property type="entry name" value="malate_synt_A"/>
    <property type="match status" value="1"/>
</dbReference>
<dbReference type="FunFam" id="1.20.1220.12:FF:000001">
    <property type="entry name" value="Malate synthase"/>
    <property type="match status" value="1"/>
</dbReference>
<dbReference type="FunFam" id="3.20.20.360:FF:000001">
    <property type="entry name" value="Malate synthase"/>
    <property type="match status" value="1"/>
</dbReference>
<dbReference type="Gene3D" id="3.20.20.360">
    <property type="entry name" value="Malate synthase, domain 3"/>
    <property type="match status" value="1"/>
</dbReference>
<dbReference type="Gene3D" id="1.20.1220.12">
    <property type="entry name" value="Malate synthase, domain III"/>
    <property type="match status" value="1"/>
</dbReference>
<dbReference type="InterPro" id="IPR044856">
    <property type="entry name" value="Malate_synth_C_sf"/>
</dbReference>
<dbReference type="InterPro" id="IPR011076">
    <property type="entry name" value="Malate_synth_sf"/>
</dbReference>
<dbReference type="InterPro" id="IPR006252">
    <property type="entry name" value="Malate_synthA"/>
</dbReference>
<dbReference type="InterPro" id="IPR019830">
    <property type="entry name" value="Malate_synthase_CS"/>
</dbReference>
<dbReference type="InterPro" id="IPR001465">
    <property type="entry name" value="Malate_synthase_TIM"/>
</dbReference>
<dbReference type="InterPro" id="IPR048355">
    <property type="entry name" value="MS_C"/>
</dbReference>
<dbReference type="InterPro" id="IPR048356">
    <property type="entry name" value="MS_N"/>
</dbReference>
<dbReference type="InterPro" id="IPR046363">
    <property type="entry name" value="MS_N_TIM-barrel_dom"/>
</dbReference>
<dbReference type="NCBIfam" id="TIGR01344">
    <property type="entry name" value="malate_syn_A"/>
    <property type="match status" value="1"/>
</dbReference>
<dbReference type="PANTHER" id="PTHR42902">
    <property type="entry name" value="MALATE SYNTHASE"/>
    <property type="match status" value="1"/>
</dbReference>
<dbReference type="PANTHER" id="PTHR42902:SF1">
    <property type="entry name" value="MALATE SYNTHASE 1-RELATED"/>
    <property type="match status" value="1"/>
</dbReference>
<dbReference type="Pfam" id="PF20659">
    <property type="entry name" value="MS_C"/>
    <property type="match status" value="1"/>
</dbReference>
<dbReference type="Pfam" id="PF20656">
    <property type="entry name" value="MS_N"/>
    <property type="match status" value="1"/>
</dbReference>
<dbReference type="Pfam" id="PF01274">
    <property type="entry name" value="MS_TIM-barrel"/>
    <property type="match status" value="1"/>
</dbReference>
<dbReference type="PIRSF" id="PIRSF001363">
    <property type="entry name" value="Malate_synth"/>
    <property type="match status" value="1"/>
</dbReference>
<dbReference type="SUPFAM" id="SSF51645">
    <property type="entry name" value="Malate synthase G"/>
    <property type="match status" value="1"/>
</dbReference>
<dbReference type="PROSITE" id="PS00510">
    <property type="entry name" value="MALATE_SYNTHASE"/>
    <property type="match status" value="1"/>
</dbReference>
<protein>
    <recommendedName>
        <fullName evidence="7">Malate synthase 1</fullName>
        <ecNumber evidence="1">2.3.3.9</ecNumber>
    </recommendedName>
</protein>
<comment type="function">
    <text evidence="2 3 9">Malate synthase which takes part in the glyoxylate cycle (PubMed:1454530). MLS1 activity is essential for cells to grow on oleic acid as a sole carbon source (PubMed:11846793). Two steps of the glyoxylate cycle take place in the cytosol, the splitting of isocitrate into succinate and glyoxylate, and the dehydrogenation of malate to oxaloacetate (PubMed:1454530). However, the formation of malate from glyoxylate and acetyl-CoA undertaken MLS1, occurs in the peroxisomes when cells are grown on oleic acid (Probable). The source of acetyl-CoA being either peroxisomal when breaking down fatty acids, or cytosolic when extra-cellular two-carbon substrates are used, therefore, although not strictly essential, the peroxisomal localization of MLS1 appears to be advantageous for cells growing on oleic acid, in that acetyl-CoA production and utilization are thereby intimately compartmentalized together to increase efficiency (Probable).</text>
</comment>
<comment type="catalytic activity">
    <reaction evidence="1">
        <text>glyoxylate + acetyl-CoA + H2O = (S)-malate + CoA + H(+)</text>
        <dbReference type="Rhea" id="RHEA:18181"/>
        <dbReference type="ChEBI" id="CHEBI:15377"/>
        <dbReference type="ChEBI" id="CHEBI:15378"/>
        <dbReference type="ChEBI" id="CHEBI:15589"/>
        <dbReference type="ChEBI" id="CHEBI:36655"/>
        <dbReference type="ChEBI" id="CHEBI:57287"/>
        <dbReference type="ChEBI" id="CHEBI:57288"/>
        <dbReference type="EC" id="2.3.3.9"/>
    </reaction>
</comment>
<comment type="pathway">
    <text evidence="1">Carbohydrate metabolism; glyoxylate cycle; (S)-malate from isocitrate: step 2/2.</text>
</comment>
<comment type="subunit">
    <text evidence="6">Interacts with PEX9.</text>
</comment>
<comment type="interaction">
    <interactant intactId="EBI-10428">
        <id>P30952</id>
    </interactant>
    <interactant intactId="EBI-701">
        <id>P33203</id>
        <label>PRP40</label>
    </interactant>
    <organismsDiffer>false</organismsDiffer>
    <experiments>2</experiments>
</comment>
<comment type="interaction">
    <interactant intactId="EBI-10428">
        <id>P30952</id>
    </interactant>
    <interactant intactId="EBI-16219">
        <id>P39940</id>
        <label>RSP5</label>
    </interactant>
    <organismsDiffer>false</organismsDiffer>
    <experiments>3</experiments>
</comment>
<comment type="subcellular location">
    <subcellularLocation>
        <location evidence="2 6">Peroxisome matrix</location>
    </subcellularLocation>
    <text evidence="6">Imported in peroxisome via recognition by the peroxisomal targeting signal receptor PEX9 in an oleate-dependent manner.</text>
</comment>
<comment type="induction">
    <text evidence="3">Expression is sensitive to carbon catabolite repression, but nearly insensitive to nitrogen catabolite repression.</text>
</comment>
<comment type="disruption phenotype">
    <text evidence="2 3">Strongly decreases the growth rate on ethanol or acetate medium.</text>
</comment>
<comment type="similarity">
    <text evidence="8">Belongs to the malate synthase family.</text>
</comment>
<organism>
    <name type="scientific">Saccharomyces cerevisiae (strain ATCC 204508 / S288c)</name>
    <name type="common">Baker's yeast</name>
    <dbReference type="NCBI Taxonomy" id="559292"/>
    <lineage>
        <taxon>Eukaryota</taxon>
        <taxon>Fungi</taxon>
        <taxon>Dikarya</taxon>
        <taxon>Ascomycota</taxon>
        <taxon>Saccharomycotina</taxon>
        <taxon>Saccharomycetes</taxon>
        <taxon>Saccharomycetales</taxon>
        <taxon>Saccharomycetaceae</taxon>
        <taxon>Saccharomyces</taxon>
    </lineage>
</organism>
<evidence type="ECO:0000250" key="1">
    <source>
        <dbReference type="UniProtKB" id="Q9LZC3"/>
    </source>
</evidence>
<evidence type="ECO:0000269" key="2">
    <source>
    </source>
</evidence>
<evidence type="ECO:0000269" key="3">
    <source>
    </source>
</evidence>
<evidence type="ECO:0000269" key="4">
    <source>
    </source>
</evidence>
<evidence type="ECO:0000269" key="5">
    <source>
    </source>
</evidence>
<evidence type="ECO:0000269" key="6">
    <source>
    </source>
</evidence>
<evidence type="ECO:0000303" key="7">
    <source>
    </source>
</evidence>
<evidence type="ECO:0000305" key="8"/>
<evidence type="ECO:0000305" key="9">
    <source>
    </source>
</evidence>
<sequence length="554" mass="62791">MVKVSLDNVKLLVDVDKEPFFKPSSTTVGDILTKDALEFIVLLHRTFNNKRKQLLENRQVVQKKLDSGSYHLDFLPETANIRNDPTWQGPILAPGLINRSTEITGPPLRNMLINALNAPVNTYMTDFEDSASPTWNNMVYGQVNLYDAIRNQIDFDTPRKSYKLNGNVANLPTIIVRPRGWHMVEKHLYVDDEPISASIFDFGLYFYHNAKELIKLGKGPYFYLPKMEHHLEAKLWNDVFCVAQDYIGIPRGTIRATVLIETLPAAFQMEEIIYQLRQHSSGLNCGRWDYIFSTIKRLRNDPNHILPNRNQVTMTSPFMDAYVKRLINTCHRRGVHAMGGMAAQIPIKDDPAANEKAMTKVRNDKIRELTNGHDGSWVAHPALAPICNEVFINMGTPNQIYFIPENVVTAANLLETKIPNGEITTEGIVQNLDIGLQYMEAWLRGSGCVPINNLMEDAATAEVSRCQLYQWVKHGVTLKDTGEKVTPELTEKILKEQVERLSKASPLGDKNKFALAAKYFLPEIRGEKFSEFLTTLLYDEIVSTKATPTDLSKL</sequence>
<gene>
    <name evidence="7" type="primary">MLS1</name>
    <name type="ordered locus">YNL117W</name>
    <name type="ORF">N1921</name>
</gene>
<keyword id="KW-0329">Glyoxylate bypass</keyword>
<keyword id="KW-0576">Peroxisome</keyword>
<keyword id="KW-1185">Reference proteome</keyword>
<keyword id="KW-0808">Transferase</keyword>
<keyword id="KW-0816">Tricarboxylic acid cycle</keyword>